<keyword id="KW-0131">Cell cycle</keyword>
<keyword id="KW-0132">Cell division</keyword>
<keyword id="KW-0997">Cell inner membrane</keyword>
<keyword id="KW-1003">Cell membrane</keyword>
<keyword id="KW-0133">Cell shape</keyword>
<keyword id="KW-0961">Cell wall biogenesis/degradation</keyword>
<keyword id="KW-0328">Glycosyltransferase</keyword>
<keyword id="KW-0472">Membrane</keyword>
<keyword id="KW-0573">Peptidoglycan synthesis</keyword>
<keyword id="KW-0808">Transferase</keyword>
<gene>
    <name evidence="1" type="primary">murG</name>
    <name type="ordered locus">Tpet_0692</name>
</gene>
<proteinExistence type="inferred from homology"/>
<comment type="function">
    <text evidence="1">Cell wall formation. Catalyzes the transfer of a GlcNAc subunit on undecaprenyl-pyrophosphoryl-MurNAc-pentapeptide (lipid intermediate I) to form undecaprenyl-pyrophosphoryl-MurNAc-(pentapeptide)GlcNAc (lipid intermediate II).</text>
</comment>
<comment type="catalytic activity">
    <reaction evidence="1">
        <text>di-trans,octa-cis-undecaprenyl diphospho-N-acetyl-alpha-D-muramoyl-L-alanyl-D-glutamyl-meso-2,6-diaminopimeloyl-D-alanyl-D-alanine + UDP-N-acetyl-alpha-D-glucosamine = di-trans,octa-cis-undecaprenyl diphospho-[N-acetyl-alpha-D-glucosaminyl-(1-&gt;4)]-N-acetyl-alpha-D-muramoyl-L-alanyl-D-glutamyl-meso-2,6-diaminopimeloyl-D-alanyl-D-alanine + UDP + H(+)</text>
        <dbReference type="Rhea" id="RHEA:31227"/>
        <dbReference type="ChEBI" id="CHEBI:15378"/>
        <dbReference type="ChEBI" id="CHEBI:57705"/>
        <dbReference type="ChEBI" id="CHEBI:58223"/>
        <dbReference type="ChEBI" id="CHEBI:61387"/>
        <dbReference type="ChEBI" id="CHEBI:61388"/>
        <dbReference type="EC" id="2.4.1.227"/>
    </reaction>
</comment>
<comment type="pathway">
    <text evidence="1">Cell wall biogenesis; peptidoglycan biosynthesis.</text>
</comment>
<comment type="subcellular location">
    <subcellularLocation>
        <location evidence="1">Cell inner membrane</location>
        <topology evidence="1">Peripheral membrane protein</topology>
        <orientation evidence="1">Cytoplasmic side</orientation>
    </subcellularLocation>
</comment>
<comment type="similarity">
    <text evidence="1">Belongs to the glycosyltransferase 28 family. MurG subfamily.</text>
</comment>
<feature type="chain" id="PRO_1000002699" description="UDP-N-acetylglucosamine--N-acetylmuramyl-(pentapeptide) pyrophosphoryl-undecaprenol N-acetylglucosamine transferase">
    <location>
        <begin position="1"/>
        <end position="339"/>
    </location>
</feature>
<feature type="binding site" evidence="1">
    <location>
        <begin position="11"/>
        <end position="13"/>
    </location>
    <ligand>
        <name>UDP-N-acetyl-alpha-D-glucosamine</name>
        <dbReference type="ChEBI" id="CHEBI:57705"/>
    </ligand>
</feature>
<feature type="binding site" evidence="1">
    <location>
        <position position="127"/>
    </location>
    <ligand>
        <name>UDP-N-acetyl-alpha-D-glucosamine</name>
        <dbReference type="ChEBI" id="CHEBI:57705"/>
    </ligand>
</feature>
<feature type="binding site" evidence="1">
    <location>
        <position position="170"/>
    </location>
    <ligand>
        <name>UDP-N-acetyl-alpha-D-glucosamine</name>
        <dbReference type="ChEBI" id="CHEBI:57705"/>
    </ligand>
</feature>
<feature type="binding site" evidence="1">
    <location>
        <position position="188"/>
    </location>
    <ligand>
        <name>UDP-N-acetyl-alpha-D-glucosamine</name>
        <dbReference type="ChEBI" id="CHEBI:57705"/>
    </ligand>
</feature>
<feature type="binding site" evidence="1">
    <location>
        <position position="235"/>
    </location>
    <ligand>
        <name>UDP-N-acetyl-alpha-D-glucosamine</name>
        <dbReference type="ChEBI" id="CHEBI:57705"/>
    </ligand>
</feature>
<feature type="binding site" evidence="1">
    <location>
        <position position="280"/>
    </location>
    <ligand>
        <name>UDP-N-acetyl-alpha-D-glucosamine</name>
        <dbReference type="ChEBI" id="CHEBI:57705"/>
    </ligand>
</feature>
<organism>
    <name type="scientific">Thermotoga petrophila (strain ATCC BAA-488 / DSM 13995 / JCM 10881 / RKU-1)</name>
    <dbReference type="NCBI Taxonomy" id="390874"/>
    <lineage>
        <taxon>Bacteria</taxon>
        <taxon>Thermotogati</taxon>
        <taxon>Thermotogota</taxon>
        <taxon>Thermotogae</taxon>
        <taxon>Thermotogales</taxon>
        <taxon>Thermotogaceae</taxon>
        <taxon>Thermotoga</taxon>
    </lineage>
</organism>
<accession>A5IKI9</accession>
<reference key="1">
    <citation type="submission" date="2007-05" db="EMBL/GenBank/DDBJ databases">
        <title>Complete sequence of Thermotoga petrophila RKU-1.</title>
        <authorList>
            <consortium name="US DOE Joint Genome Institute"/>
            <person name="Copeland A."/>
            <person name="Lucas S."/>
            <person name="Lapidus A."/>
            <person name="Barry K."/>
            <person name="Glavina del Rio T."/>
            <person name="Dalin E."/>
            <person name="Tice H."/>
            <person name="Pitluck S."/>
            <person name="Sims D."/>
            <person name="Brettin T."/>
            <person name="Bruce D."/>
            <person name="Detter J.C."/>
            <person name="Han C."/>
            <person name="Tapia R."/>
            <person name="Schmutz J."/>
            <person name="Larimer F."/>
            <person name="Land M."/>
            <person name="Hauser L."/>
            <person name="Kyrpides N."/>
            <person name="Mikhailova N."/>
            <person name="Nelson K."/>
            <person name="Gogarten J.P."/>
            <person name="Noll K."/>
            <person name="Richardson P."/>
        </authorList>
    </citation>
    <scope>NUCLEOTIDE SEQUENCE [LARGE SCALE GENOMIC DNA]</scope>
    <source>
        <strain>ATCC BAA-488 / DSM 13995 / JCM 10881 / RKU-1</strain>
    </source>
</reference>
<name>MURG_THEP1</name>
<sequence>MIKVAAAGGGTGGHLYPLLAILETLAKRVDVKVLFFAVKGKIDERVVRKDHPEFETVSIDVRGLLRPLHHPKNLWRTLKIGIATIEVKKHLKRFKPDLVVLTGGYISGVVGLAAKDLGIPIFVHEQNVVPGLAVKVLSQYAKKVFVSFERTRDYLREWQDKIVVTGCPVRETEKEAPLKDFVLVLGGSLGSEAINELMEKVYPELQETQFVHSTGSDDWTERLSVFPNVTALTYIDPMGAYWKKAIASISRAGASTIAEMMYYGVPGILIPWESSAESHQLENALEAERLGYGIVIRENEASPRKIIESIDKVVKKGKIEKMKENPASKISEEILGEIM</sequence>
<protein>
    <recommendedName>
        <fullName evidence="1">UDP-N-acetylglucosamine--N-acetylmuramyl-(pentapeptide) pyrophosphoryl-undecaprenol N-acetylglucosamine transferase</fullName>
        <ecNumber evidence="1">2.4.1.227</ecNumber>
    </recommendedName>
    <alternativeName>
        <fullName evidence="1">Undecaprenyl-PP-MurNAc-pentapeptide-UDPGlcNAc GlcNAc transferase</fullName>
    </alternativeName>
</protein>
<dbReference type="EC" id="2.4.1.227" evidence="1"/>
<dbReference type="EMBL" id="CP000702">
    <property type="protein sequence ID" value="ABQ46712.1"/>
    <property type="molecule type" value="Genomic_DNA"/>
</dbReference>
<dbReference type="RefSeq" id="WP_011943296.1">
    <property type="nucleotide sequence ID" value="NC_009486.1"/>
</dbReference>
<dbReference type="SMR" id="A5IKI9"/>
<dbReference type="STRING" id="390874.Tpet_0692"/>
<dbReference type="CAZy" id="GT28">
    <property type="family name" value="Glycosyltransferase Family 28"/>
</dbReference>
<dbReference type="KEGG" id="tpt:Tpet_0692"/>
<dbReference type="eggNOG" id="COG0707">
    <property type="taxonomic scope" value="Bacteria"/>
</dbReference>
<dbReference type="HOGENOM" id="CLU_037404_0_1_0"/>
<dbReference type="UniPathway" id="UPA00219"/>
<dbReference type="Proteomes" id="UP000006558">
    <property type="component" value="Chromosome"/>
</dbReference>
<dbReference type="GO" id="GO:0005886">
    <property type="term" value="C:plasma membrane"/>
    <property type="evidence" value="ECO:0007669"/>
    <property type="project" value="UniProtKB-SubCell"/>
</dbReference>
<dbReference type="GO" id="GO:0051991">
    <property type="term" value="F:UDP-N-acetyl-D-glucosamine:N-acetylmuramoyl-L-alanyl-D-glutamyl-meso-2,6-diaminopimelyl-D-alanyl-D-alanine-diphosphoundecaprenol 4-beta-N-acetylglucosaminlytransferase activity"/>
    <property type="evidence" value="ECO:0007669"/>
    <property type="project" value="RHEA"/>
</dbReference>
<dbReference type="GO" id="GO:0050511">
    <property type="term" value="F:undecaprenyldiphospho-muramoylpentapeptide beta-N-acetylglucosaminyltransferase activity"/>
    <property type="evidence" value="ECO:0007669"/>
    <property type="project" value="UniProtKB-UniRule"/>
</dbReference>
<dbReference type="GO" id="GO:0005975">
    <property type="term" value="P:carbohydrate metabolic process"/>
    <property type="evidence" value="ECO:0007669"/>
    <property type="project" value="InterPro"/>
</dbReference>
<dbReference type="GO" id="GO:0051301">
    <property type="term" value="P:cell division"/>
    <property type="evidence" value="ECO:0007669"/>
    <property type="project" value="UniProtKB-KW"/>
</dbReference>
<dbReference type="GO" id="GO:0071555">
    <property type="term" value="P:cell wall organization"/>
    <property type="evidence" value="ECO:0007669"/>
    <property type="project" value="UniProtKB-KW"/>
</dbReference>
<dbReference type="GO" id="GO:0030259">
    <property type="term" value="P:lipid glycosylation"/>
    <property type="evidence" value="ECO:0007669"/>
    <property type="project" value="UniProtKB-UniRule"/>
</dbReference>
<dbReference type="GO" id="GO:0009252">
    <property type="term" value="P:peptidoglycan biosynthetic process"/>
    <property type="evidence" value="ECO:0007669"/>
    <property type="project" value="UniProtKB-UniRule"/>
</dbReference>
<dbReference type="GO" id="GO:0008360">
    <property type="term" value="P:regulation of cell shape"/>
    <property type="evidence" value="ECO:0007669"/>
    <property type="project" value="UniProtKB-KW"/>
</dbReference>
<dbReference type="CDD" id="cd03785">
    <property type="entry name" value="GT28_MurG"/>
    <property type="match status" value="1"/>
</dbReference>
<dbReference type="Gene3D" id="3.40.50.2000">
    <property type="entry name" value="Glycogen Phosphorylase B"/>
    <property type="match status" value="2"/>
</dbReference>
<dbReference type="HAMAP" id="MF_00033">
    <property type="entry name" value="MurG"/>
    <property type="match status" value="1"/>
</dbReference>
<dbReference type="InterPro" id="IPR006009">
    <property type="entry name" value="GlcNAc_MurG"/>
</dbReference>
<dbReference type="InterPro" id="IPR007235">
    <property type="entry name" value="Glyco_trans_28_C"/>
</dbReference>
<dbReference type="InterPro" id="IPR004276">
    <property type="entry name" value="GlycoTrans_28_N"/>
</dbReference>
<dbReference type="NCBIfam" id="TIGR01133">
    <property type="entry name" value="murG"/>
    <property type="match status" value="1"/>
</dbReference>
<dbReference type="PANTHER" id="PTHR21015:SF22">
    <property type="entry name" value="GLYCOSYLTRANSFERASE"/>
    <property type="match status" value="1"/>
</dbReference>
<dbReference type="PANTHER" id="PTHR21015">
    <property type="entry name" value="UDP-N-ACETYLGLUCOSAMINE--N-ACETYLMURAMYL-(PENTAPEPTIDE) PYROPHOSPHORYL-UNDECAPRENOL N-ACETYLGLUCOSAMINE TRANSFERASE 1"/>
    <property type="match status" value="1"/>
</dbReference>
<dbReference type="Pfam" id="PF04101">
    <property type="entry name" value="Glyco_tran_28_C"/>
    <property type="match status" value="1"/>
</dbReference>
<dbReference type="Pfam" id="PF03033">
    <property type="entry name" value="Glyco_transf_28"/>
    <property type="match status" value="1"/>
</dbReference>
<dbReference type="SUPFAM" id="SSF53756">
    <property type="entry name" value="UDP-Glycosyltransferase/glycogen phosphorylase"/>
    <property type="match status" value="1"/>
</dbReference>
<evidence type="ECO:0000255" key="1">
    <source>
        <dbReference type="HAMAP-Rule" id="MF_00033"/>
    </source>
</evidence>